<reference key="1">
    <citation type="journal article" date="1989" name="Cell">
        <title>Amplification of the multidrug resistance gene in some chloroquine-resistant isolates of P. falciparum.</title>
        <authorList>
            <person name="Foote S.J."/>
            <person name="Thompson J.K."/>
            <person name="Cowman A.F."/>
            <person name="Kemp D.J."/>
        </authorList>
    </citation>
    <scope>NUCLEOTIDE SEQUENCE [GENOMIC DNA]</scope>
</reference>
<reference key="2">
    <citation type="journal article" date="1991" name="Mol. Cell. Biol.">
        <title>Amplification of the multidrug resistance gene pfmdr1 in Plasmodium falciparum has arisen as multiple independent events.</title>
        <authorList>
            <person name="Triglia T."/>
            <person name="Foote S.J."/>
            <person name="Kemp D.J."/>
            <person name="Cowman A.F."/>
        </authorList>
    </citation>
    <scope>NUCLEOTIDE SEQUENCE [GENOMIC DNA]</scope>
</reference>
<reference key="3">
    <citation type="journal article" date="1993" name="Mol. Biochem. Parasitol.">
        <title>Amplification of pfmdr 1 associated with mefloquine and halofantrine resistance in Plasmodium falciparum from Thailand.</title>
        <authorList>
            <person name="Wilson C.M."/>
            <person name="Volkman S.K."/>
            <person name="Thaithong S."/>
            <person name="Martin R.K."/>
            <person name="Kyle D.E."/>
            <person name="Milhous W.K."/>
            <person name="Wirth D.F."/>
        </authorList>
    </citation>
    <scope>NUCLEOTIDE SEQUENCE [GENOMIC DNA]</scope>
</reference>
<gene>
    <name type="primary">MDR1</name>
</gene>
<protein>
    <recommendedName>
        <fullName>Multidrug resistance protein 1</fullName>
        <ecNumber evidence="1">7.6.2.2</ecNumber>
    </recommendedName>
    <alternativeName>
        <fullName>Chloroquine resistance protein</fullName>
    </alternativeName>
</protein>
<feature type="chain" id="PRO_0000093344" description="Multidrug resistance protein 1">
    <location>
        <begin position="1"/>
        <end position="1419"/>
    </location>
</feature>
<feature type="topological domain" description="Cytoplasmic" evidence="2">
    <location>
        <begin position="1"/>
        <end position="55"/>
    </location>
</feature>
<feature type="transmembrane region" description="Helical" evidence="4">
    <location>
        <begin position="56"/>
        <end position="82"/>
    </location>
</feature>
<feature type="transmembrane region" description="Helical" evidence="4">
    <location>
        <begin position="91"/>
        <end position="116"/>
    </location>
</feature>
<feature type="transmembrane region" description="Helical" evidence="4">
    <location>
        <begin position="160"/>
        <end position="188"/>
    </location>
</feature>
<feature type="transmembrane region" description="Helical" evidence="4">
    <location>
        <begin position="194"/>
        <end position="212"/>
    </location>
</feature>
<feature type="transmembrane region" description="Helical" evidence="4">
    <location>
        <begin position="279"/>
        <end position="298"/>
    </location>
</feature>
<feature type="transmembrane region" description="Helical" evidence="4">
    <location>
        <begin position="314"/>
        <end position="338"/>
    </location>
</feature>
<feature type="topological domain" description="Cytoplasmic" evidence="2">
    <location>
        <begin position="339"/>
        <end position="788"/>
    </location>
</feature>
<feature type="transmembrane region" description="Helical" evidence="4">
    <location>
        <begin position="789"/>
        <end position="809"/>
    </location>
</feature>
<feature type="transmembrane region" description="Helical" evidence="4">
    <location>
        <begin position="830"/>
        <end position="850"/>
    </location>
</feature>
<feature type="transmembrane region" description="Helical" evidence="4">
    <location>
        <begin position="908"/>
        <end position="928"/>
    </location>
</feature>
<feature type="transmembrane region" description="Helical" evidence="4">
    <location>
        <begin position="929"/>
        <end position="949"/>
    </location>
</feature>
<feature type="transmembrane region" description="Helical" evidence="4">
    <location>
        <begin position="1028"/>
        <end position="1048"/>
    </location>
</feature>
<feature type="transmembrane region" description="Helical" evidence="4">
    <location>
        <begin position="1063"/>
        <end position="1083"/>
    </location>
</feature>
<feature type="topological domain" description="Cytoplasmic" evidence="2">
    <location>
        <begin position="1084"/>
        <end position="1419"/>
    </location>
</feature>
<feature type="domain" description="ABC transmembrane type-1 1" evidence="4">
    <location>
        <begin position="57"/>
        <end position="345"/>
    </location>
</feature>
<feature type="domain" description="ABC transporter 1" evidence="3">
    <location>
        <begin position="378"/>
        <end position="662"/>
    </location>
</feature>
<feature type="domain" description="ABC transmembrane type-1 2" evidence="4">
    <location>
        <begin position="789"/>
        <end position="1089"/>
    </location>
</feature>
<feature type="domain" description="ABC transporter 2" evidence="3">
    <location>
        <begin position="1126"/>
        <end position="1416"/>
    </location>
</feature>
<feature type="region of interest" description="R domain; regulates transporter activity" evidence="1">
    <location>
        <begin position="1"/>
        <end position="37"/>
    </location>
</feature>
<feature type="region of interest" description="Disordered" evidence="5">
    <location>
        <begin position="639"/>
        <end position="665"/>
    </location>
</feature>
<feature type="region of interest" description="Disordered" evidence="5">
    <location>
        <begin position="697"/>
        <end position="752"/>
    </location>
</feature>
<feature type="compositionally biased region" description="Low complexity" evidence="5">
    <location>
        <begin position="643"/>
        <end position="665"/>
    </location>
</feature>
<feature type="compositionally biased region" description="Low complexity" evidence="5">
    <location>
        <begin position="697"/>
        <end position="715"/>
    </location>
</feature>
<feature type="compositionally biased region" description="Polar residues" evidence="5">
    <location>
        <begin position="723"/>
        <end position="749"/>
    </location>
</feature>
<feature type="binding site" evidence="1">
    <location>
        <position position="387"/>
    </location>
    <ligand>
        <name>ATP</name>
        <dbReference type="ChEBI" id="CHEBI:30616"/>
        <label>1</label>
    </ligand>
</feature>
<feature type="binding site" evidence="1">
    <location>
        <position position="389"/>
    </location>
    <ligand>
        <name>ATP</name>
        <dbReference type="ChEBI" id="CHEBI:30616"/>
        <label>1</label>
    </ligand>
</feature>
<feature type="binding site" evidence="1">
    <location>
        <position position="390"/>
    </location>
    <ligand>
        <name>ATP</name>
        <dbReference type="ChEBI" id="CHEBI:30616"/>
        <label>1</label>
    </ligand>
</feature>
<feature type="binding site" evidence="1">
    <location>
        <position position="415"/>
    </location>
    <ligand>
        <name>ATP</name>
        <dbReference type="ChEBI" id="CHEBI:30616"/>
        <label>1</label>
    </ligand>
</feature>
<feature type="binding site" evidence="1">
    <location>
        <position position="417"/>
    </location>
    <ligand>
        <name>ATP</name>
        <dbReference type="ChEBI" id="CHEBI:30616"/>
        <label>1</label>
    </ligand>
</feature>
<feature type="binding site" evidence="1">
    <location>
        <position position="418"/>
    </location>
    <ligand>
        <name>ATP</name>
        <dbReference type="ChEBI" id="CHEBI:30616"/>
        <label>1</label>
    </ligand>
</feature>
<feature type="binding site" evidence="1">
    <location>
        <position position="419"/>
    </location>
    <ligand>
        <name>ATP</name>
        <dbReference type="ChEBI" id="CHEBI:30616"/>
        <label>1</label>
    </ligand>
</feature>
<feature type="binding site" evidence="1">
    <location>
        <position position="420"/>
    </location>
    <ligand>
        <name>ATP</name>
        <dbReference type="ChEBI" id="CHEBI:30616"/>
        <label>1</label>
    </ligand>
</feature>
<feature type="binding site" evidence="1">
    <location>
        <position position="421"/>
    </location>
    <ligand>
        <name>ATP</name>
        <dbReference type="ChEBI" id="CHEBI:30616"/>
        <label>1</label>
    </ligand>
</feature>
<feature type="binding site" evidence="1">
    <location>
        <position position="462"/>
    </location>
    <ligand>
        <name>ATP</name>
        <dbReference type="ChEBI" id="CHEBI:30616"/>
        <label>1</label>
    </ligand>
</feature>
<feature type="binding site" evidence="1">
    <location>
        <position position="462"/>
    </location>
    <ligand>
        <name>Mg(2+)</name>
        <dbReference type="ChEBI" id="CHEBI:18420"/>
        <label>1</label>
    </ligand>
</feature>
<feature type="binding site" evidence="1">
    <location>
        <position position="562"/>
    </location>
    <ligand>
        <name>ATP</name>
        <dbReference type="ChEBI" id="CHEBI:30616"/>
        <label>2</label>
    </ligand>
</feature>
<feature type="binding site" evidence="1">
    <location>
        <position position="564"/>
    </location>
    <ligand>
        <name>ATP</name>
        <dbReference type="ChEBI" id="CHEBI:30616"/>
        <label>2</label>
    </ligand>
</feature>
<feature type="binding site" evidence="1">
    <location>
        <position position="566"/>
    </location>
    <ligand>
        <name>ATP</name>
        <dbReference type="ChEBI" id="CHEBI:30616"/>
        <label>2</label>
    </ligand>
</feature>
<feature type="binding site" evidence="1">
    <location>
        <position position="567"/>
    </location>
    <ligand>
        <name>ATP</name>
        <dbReference type="ChEBI" id="CHEBI:30616"/>
        <label>2</label>
    </ligand>
</feature>
<feature type="binding site" evidence="1">
    <location>
        <position position="1135"/>
    </location>
    <ligand>
        <name>ATP</name>
        <dbReference type="ChEBI" id="CHEBI:30616"/>
        <label>2</label>
    </ligand>
</feature>
<feature type="binding site" evidence="1">
    <location>
        <position position="1138"/>
    </location>
    <ligand>
        <name>ATP</name>
        <dbReference type="ChEBI" id="CHEBI:30616"/>
        <label>2</label>
    </ligand>
</feature>
<feature type="binding site" evidence="1">
    <location>
        <position position="1163"/>
    </location>
    <ligand>
        <name>ATP</name>
        <dbReference type="ChEBI" id="CHEBI:30616"/>
        <label>2</label>
    </ligand>
</feature>
<feature type="binding site" evidence="1">
    <location>
        <position position="1164"/>
    </location>
    <ligand>
        <name>ATP</name>
        <dbReference type="ChEBI" id="CHEBI:30616"/>
        <label>2</label>
    </ligand>
</feature>
<feature type="binding site" evidence="1">
    <location>
        <position position="1166"/>
    </location>
    <ligand>
        <name>ATP</name>
        <dbReference type="ChEBI" id="CHEBI:30616"/>
        <label>2</label>
    </ligand>
</feature>
<feature type="binding site" evidence="1">
    <location>
        <position position="1167"/>
    </location>
    <ligand>
        <name>ATP</name>
        <dbReference type="ChEBI" id="CHEBI:30616"/>
        <label>2</label>
    </ligand>
</feature>
<feature type="binding site" evidence="1">
    <location>
        <position position="1168"/>
    </location>
    <ligand>
        <name>ATP</name>
        <dbReference type="ChEBI" id="CHEBI:30616"/>
        <label>2</label>
    </ligand>
</feature>
<feature type="binding site" evidence="1">
    <location>
        <position position="1168"/>
    </location>
    <ligand>
        <name>Mg(2+)</name>
        <dbReference type="ChEBI" id="CHEBI:18420"/>
        <label>2</label>
    </ligand>
</feature>
<feature type="binding site" evidence="1">
    <location>
        <position position="1169"/>
    </location>
    <ligand>
        <name>ATP</name>
        <dbReference type="ChEBI" id="CHEBI:30616"/>
        <label>2</label>
    </ligand>
</feature>
<feature type="binding site" evidence="1">
    <location>
        <position position="1256"/>
    </location>
    <ligand>
        <name>ATP</name>
        <dbReference type="ChEBI" id="CHEBI:30616"/>
        <label>2</label>
    </ligand>
</feature>
<feature type="binding site" evidence="1">
    <location>
        <position position="1256"/>
    </location>
    <ligand>
        <name>Mg(2+)</name>
        <dbReference type="ChEBI" id="CHEBI:18420"/>
        <label>2</label>
    </ligand>
</feature>
<feature type="binding site" evidence="1">
    <location>
        <position position="1312"/>
    </location>
    <ligand>
        <name>ATP</name>
        <dbReference type="ChEBI" id="CHEBI:30616"/>
        <label>1</label>
    </ligand>
</feature>
<feature type="binding site" evidence="1">
    <location>
        <position position="1313"/>
    </location>
    <ligand>
        <name>ATP</name>
        <dbReference type="ChEBI" id="CHEBI:30616"/>
        <label>1</label>
    </ligand>
</feature>
<feature type="binding site" evidence="1">
    <location>
        <position position="1315"/>
    </location>
    <ligand>
        <name>ATP</name>
        <dbReference type="ChEBI" id="CHEBI:30616"/>
        <label>1</label>
    </ligand>
</feature>
<feature type="binding site" evidence="1">
    <location>
        <position position="1316"/>
    </location>
    <ligand>
        <name>ATP</name>
        <dbReference type="ChEBI" id="CHEBI:30616"/>
        <label>1</label>
    </ligand>
</feature>
<feature type="site" description="Important for mefloquine and halofantrine binding" evidence="1">
    <location>
        <position position="331"/>
    </location>
</feature>
<feature type="glycosylation site" description="N-linked (GlcNAc...) asparagine" evidence="2">
    <location>
        <position position="228"/>
    </location>
</feature>
<feature type="glycosylation site" description="N-linked (GlcNAc...) asparagine" evidence="2">
    <location>
        <position position="258"/>
    </location>
</feature>
<feature type="glycosylation site" description="N-linked (GlcNAc...) asparagine" evidence="2">
    <location>
        <position position="964"/>
    </location>
</feature>
<organism>
    <name type="scientific">Plasmodium falciparum (isolate FC27 / Papua New Guinea)</name>
    <dbReference type="NCBI Taxonomy" id="5837"/>
    <lineage>
        <taxon>Eukaryota</taxon>
        <taxon>Sar</taxon>
        <taxon>Alveolata</taxon>
        <taxon>Apicomplexa</taxon>
        <taxon>Aconoidasida</taxon>
        <taxon>Haemosporida</taxon>
        <taxon>Plasmodiidae</taxon>
        <taxon>Plasmodium</taxon>
        <taxon>Plasmodium (Laverania)</taxon>
    </lineage>
</organism>
<proteinExistence type="inferred from homology"/>
<keyword id="KW-0067">ATP-binding</keyword>
<keyword id="KW-0325">Glycoprotein</keyword>
<keyword id="KW-0460">Magnesium</keyword>
<keyword id="KW-0472">Membrane</keyword>
<keyword id="KW-0479">Metal-binding</keyword>
<keyword id="KW-0547">Nucleotide-binding</keyword>
<keyword id="KW-0677">Repeat</keyword>
<keyword id="KW-1278">Translocase</keyword>
<keyword id="KW-0812">Transmembrane</keyword>
<keyword id="KW-1133">Transmembrane helix</keyword>
<keyword id="KW-0813">Transport</keyword>
<keyword id="KW-0926">Vacuole</keyword>
<sequence>MGKEQKEKKDGNLSIKEEVEKELNKKSTAELFRKIKNEKISFFLPFKCLPAQHRKLLFISFVCAVLSGGTLPFFISVFGVILKNMNLGDDINPIILSLVSIGLVQFILSMISSYCMDVITSKILKTLKLEYLRSVFYQDGQFHDNNPGSKLRSDLDFYLEQVSSGIGTKFITIFTYASSFLGLYIWSLIKNARLTLCITCVFPLIYVCGVICNKKVKLNKKTSLLYNNNTMSIIEEALMGIRTVASYCGEKTILNKFNLSETFYSKYILKANFVEALHIGLINGLILVSYAFGFWYGTRIIINSATNQYPNNDFNGASVISILLGVLISMFMLTIILPNITEYMKALEATNSLYEIINRKPLVENNDDGETLPNIKKIEFKNVRFHYDTRKDVEIYKDLSFTLKEGKTYAFVGESGCGKSTILKLIERLYDPTEGDIIVNDSHNLKDINLKWWRSKIGVVSQDPLLFSNSIKNNIKYSLYSLKDLEAMENYYEENTNDTYENKNFSLISNSMTSNELLEMKKEYQTIKDSDVVDVSKKVLIHDFVSSLPDKYDTLVGSNASKLSGGQKQRISIARAIMRNPKILILDEATSSLDNKSEYLVQKTINNLKGNENRITIIIAHRLSTIRYANTIFVLSNRERSDNNNNNNNDDNNNNNNNNNNKINNEGSYIIEQGTHDSLMKNKNGIYHLMINNQKISSNKSSNNGNDNGSDNKSSAYKDSDTGNDADNMNSLSIHENENISNNRNCKNTAENEKEEKVPFFKRMFRRKKKAPNNLRIIYKEIFSYKKDVTIIFFSILVAGGLYPVFALLYARYVSTLFDFANLEYNSNKYSIYILLIAIAMFISETLKNYYNNKIGEKVEKTMKRRLFENILYQEMSFFDQDKNTPGVLSAHINRDVHLLKTGLVNNIVIFSHFIMLFLVSMVMSFYFCPIVAAVLTFIYFINMRVFAVRARLTKSKEIEKKENMSSGVFAFSSDDEMFKDPSFLIQEAFYNMHTVINYGLEDYFCNLIEKAIDYKNKGQKRRIIVNAALWGFSQSAQLFINSFAYWFGSFLIKRGTILVDDFMKSLFTFIFTGSYAGKLMSLKGDSENAKLSFEKYYPLMIRKSNIDVRDDGGIRINKNLIKGKVDIKDVNFRYISRPNVPIYKNLSFTCDSKKTTAIVGETGSGKSTFMNLLLRFYDLKNDHIILKNDMTNFQDYQNNNNNSLVLKNVNEFSNQSGSAEDYTVFNNNGEILLDDINICDYNLRDLRNLFSIVSQEPMLFNMSIYENIKFGREDATLEDVKRVSKFAAIDEFIESLPNKYDTNVGPYGKSLSGGQKQRIAIARALLREPKILLLDEATSSLDSNSEKLIEKTIVDIKDKADKTIITIAHRIASIKRSDKIVVFNNPDRNGTFVQSHGTHDELLSAQDGIYKKYVKLAK</sequence>
<evidence type="ECO:0000250" key="1">
    <source>
        <dbReference type="UniProtKB" id="Q7K6A5"/>
    </source>
</evidence>
<evidence type="ECO:0000255" key="2"/>
<evidence type="ECO:0000255" key="3">
    <source>
        <dbReference type="PROSITE-ProRule" id="PRU00434"/>
    </source>
</evidence>
<evidence type="ECO:0000255" key="4">
    <source>
        <dbReference type="PROSITE-ProRule" id="PRU00441"/>
    </source>
</evidence>
<evidence type="ECO:0000256" key="5">
    <source>
        <dbReference type="SAM" id="MobiDB-lite"/>
    </source>
</evidence>
<evidence type="ECO:0000305" key="6"/>
<dbReference type="EC" id="7.6.2.2" evidence="1"/>
<dbReference type="EMBL" id="M29154">
    <property type="protein sequence ID" value="AAA29646.1"/>
    <property type="molecule type" value="Genomic_DNA"/>
</dbReference>
<dbReference type="EMBL" id="X56851">
    <property type="protein sequence ID" value="CAA40180.1"/>
    <property type="molecule type" value="Genomic_DNA"/>
</dbReference>
<dbReference type="EMBL" id="S53996">
    <property type="protein sequence ID" value="AAD13870.1"/>
    <property type="molecule type" value="Genomic_DNA"/>
</dbReference>
<dbReference type="PIR" id="S18204">
    <property type="entry name" value="DVZQF"/>
</dbReference>
<dbReference type="SMR" id="P13568"/>
<dbReference type="DrugBank" id="DB11638">
    <property type="generic name" value="Artenimol"/>
</dbReference>
<dbReference type="TCDB" id="3.A.1.201.4">
    <property type="family name" value="the atp-binding cassette (abc) superfamily"/>
</dbReference>
<dbReference type="GlyCosmos" id="P13568">
    <property type="glycosylation" value="3 sites, No reported glycans"/>
</dbReference>
<dbReference type="BRENDA" id="7.6.2.2">
    <property type="organism ID" value="4889"/>
</dbReference>
<dbReference type="GO" id="GO:0005743">
    <property type="term" value="C:mitochondrial inner membrane"/>
    <property type="evidence" value="ECO:0007669"/>
    <property type="project" value="TreeGrafter"/>
</dbReference>
<dbReference type="GO" id="GO:0005774">
    <property type="term" value="C:vacuolar membrane"/>
    <property type="evidence" value="ECO:0007669"/>
    <property type="project" value="UniProtKB-SubCell"/>
</dbReference>
<dbReference type="GO" id="GO:0015421">
    <property type="term" value="F:ABC-type oligopeptide transporter activity"/>
    <property type="evidence" value="ECO:0007669"/>
    <property type="project" value="TreeGrafter"/>
</dbReference>
<dbReference type="GO" id="GO:0008559">
    <property type="term" value="F:ABC-type xenobiotic transporter activity"/>
    <property type="evidence" value="ECO:0007669"/>
    <property type="project" value="UniProtKB-EC"/>
</dbReference>
<dbReference type="GO" id="GO:0005524">
    <property type="term" value="F:ATP binding"/>
    <property type="evidence" value="ECO:0007669"/>
    <property type="project" value="UniProtKB-KW"/>
</dbReference>
<dbReference type="GO" id="GO:0016887">
    <property type="term" value="F:ATP hydrolysis activity"/>
    <property type="evidence" value="ECO:0007669"/>
    <property type="project" value="InterPro"/>
</dbReference>
<dbReference type="GO" id="GO:0046872">
    <property type="term" value="F:metal ion binding"/>
    <property type="evidence" value="ECO:0007669"/>
    <property type="project" value="UniProtKB-KW"/>
</dbReference>
<dbReference type="GO" id="GO:0090374">
    <property type="term" value="P:oligopeptide export from mitochondrion"/>
    <property type="evidence" value="ECO:0007669"/>
    <property type="project" value="TreeGrafter"/>
</dbReference>
<dbReference type="CDD" id="cd18577">
    <property type="entry name" value="ABC_6TM_Pgp_ABCB1_D1_like"/>
    <property type="match status" value="1"/>
</dbReference>
<dbReference type="CDD" id="cd18578">
    <property type="entry name" value="ABC_6TM_Pgp_ABCB1_D2_like"/>
    <property type="match status" value="1"/>
</dbReference>
<dbReference type="CDD" id="cd03249">
    <property type="entry name" value="ABC_MTABC3_MDL1_MDL2"/>
    <property type="match status" value="1"/>
</dbReference>
<dbReference type="FunFam" id="3.40.50.300:FF:000604">
    <property type="entry name" value="ABC transporter B family member 28"/>
    <property type="match status" value="1"/>
</dbReference>
<dbReference type="FunFam" id="1.20.1560.10:FF:000108">
    <property type="entry name" value="Multidrug resistance protein"/>
    <property type="match status" value="1"/>
</dbReference>
<dbReference type="Gene3D" id="1.20.1560.10">
    <property type="entry name" value="ABC transporter type 1, transmembrane domain"/>
    <property type="match status" value="2"/>
</dbReference>
<dbReference type="Gene3D" id="3.40.50.300">
    <property type="entry name" value="P-loop containing nucleotide triphosphate hydrolases"/>
    <property type="match status" value="2"/>
</dbReference>
<dbReference type="InterPro" id="IPR003593">
    <property type="entry name" value="AAA+_ATPase"/>
</dbReference>
<dbReference type="InterPro" id="IPR011527">
    <property type="entry name" value="ABC1_TM_dom"/>
</dbReference>
<dbReference type="InterPro" id="IPR036640">
    <property type="entry name" value="ABC1_TM_sf"/>
</dbReference>
<dbReference type="InterPro" id="IPR003439">
    <property type="entry name" value="ABC_transporter-like_ATP-bd"/>
</dbReference>
<dbReference type="InterPro" id="IPR017871">
    <property type="entry name" value="ABC_transporter-like_CS"/>
</dbReference>
<dbReference type="InterPro" id="IPR027417">
    <property type="entry name" value="P-loop_NTPase"/>
</dbReference>
<dbReference type="InterPro" id="IPR039421">
    <property type="entry name" value="Type_1_exporter"/>
</dbReference>
<dbReference type="PANTHER" id="PTHR43394">
    <property type="entry name" value="ATP-DEPENDENT PERMEASE MDL1, MITOCHONDRIAL"/>
    <property type="match status" value="1"/>
</dbReference>
<dbReference type="PANTHER" id="PTHR43394:SF27">
    <property type="entry name" value="ATP-DEPENDENT TRANSLOCASE ABCB1-LIKE"/>
    <property type="match status" value="1"/>
</dbReference>
<dbReference type="Pfam" id="PF00664">
    <property type="entry name" value="ABC_membrane"/>
    <property type="match status" value="2"/>
</dbReference>
<dbReference type="Pfam" id="PF00005">
    <property type="entry name" value="ABC_tran"/>
    <property type="match status" value="3"/>
</dbReference>
<dbReference type="SMART" id="SM00382">
    <property type="entry name" value="AAA"/>
    <property type="match status" value="2"/>
</dbReference>
<dbReference type="SUPFAM" id="SSF90123">
    <property type="entry name" value="ABC transporter transmembrane region"/>
    <property type="match status" value="2"/>
</dbReference>
<dbReference type="SUPFAM" id="SSF52540">
    <property type="entry name" value="P-loop containing nucleoside triphosphate hydrolases"/>
    <property type="match status" value="2"/>
</dbReference>
<dbReference type="PROSITE" id="PS50929">
    <property type="entry name" value="ABC_TM1F"/>
    <property type="match status" value="2"/>
</dbReference>
<dbReference type="PROSITE" id="PS00211">
    <property type="entry name" value="ABC_TRANSPORTER_1"/>
    <property type="match status" value="2"/>
</dbReference>
<dbReference type="PROSITE" id="PS50893">
    <property type="entry name" value="ABC_TRANSPORTER_2"/>
    <property type="match status" value="2"/>
</dbReference>
<name>MDR_PLAFF</name>
<comment type="function">
    <text>Energy-dependent efflux pump responsible for decreased drug accumulation in multidrug-resistant cells.</text>
</comment>
<comment type="catalytic activity">
    <reaction evidence="1">
        <text>ATP + H2O + xenobioticSide 1 = ADP + phosphate + xenobioticSide 2.</text>
        <dbReference type="EC" id="7.6.2.2"/>
    </reaction>
</comment>
<comment type="subcellular location">
    <subcellularLocation>
        <location evidence="1">Vacuole membrane</location>
        <topology evidence="2">Multi-pass membrane protein</topology>
    </subcellularLocation>
</comment>
<comment type="miscellaneous">
    <text>P.falciparum resistant to the drug chloroquine have multiple copies of the gene coding for MDR.</text>
</comment>
<comment type="similarity">
    <text evidence="6">Belongs to the ABC transporter superfamily. ABCB family. Multidrug resistance exporter (TC 3.A.1.201) subfamily.</text>
</comment>
<accession>P13568</accession>